<name>RS19_PSYA2</name>
<feature type="chain" id="PRO_0000265406" description="Small ribosomal subunit protein uS19">
    <location>
        <begin position="1"/>
        <end position="91"/>
    </location>
</feature>
<proteinExistence type="inferred from homology"/>
<organism>
    <name type="scientific">Psychrobacter arcticus (strain DSM 17307 / VKM B-2377 / 273-4)</name>
    <dbReference type="NCBI Taxonomy" id="259536"/>
    <lineage>
        <taxon>Bacteria</taxon>
        <taxon>Pseudomonadati</taxon>
        <taxon>Pseudomonadota</taxon>
        <taxon>Gammaproteobacteria</taxon>
        <taxon>Moraxellales</taxon>
        <taxon>Moraxellaceae</taxon>
        <taxon>Psychrobacter</taxon>
    </lineage>
</organism>
<keyword id="KW-1185">Reference proteome</keyword>
<keyword id="KW-0687">Ribonucleoprotein</keyword>
<keyword id="KW-0689">Ribosomal protein</keyword>
<keyword id="KW-0694">RNA-binding</keyword>
<keyword id="KW-0699">rRNA-binding</keyword>
<comment type="function">
    <text evidence="1">Protein S19 forms a complex with S13 that binds strongly to the 16S ribosomal RNA.</text>
</comment>
<comment type="similarity">
    <text evidence="1">Belongs to the universal ribosomal protein uS19 family.</text>
</comment>
<reference key="1">
    <citation type="journal article" date="2010" name="Appl. Environ. Microbiol.">
        <title>The genome sequence of Psychrobacter arcticus 273-4, a psychroactive Siberian permafrost bacterium, reveals mechanisms for adaptation to low-temperature growth.</title>
        <authorList>
            <person name="Ayala-del-Rio H.L."/>
            <person name="Chain P.S."/>
            <person name="Grzymski J.J."/>
            <person name="Ponder M.A."/>
            <person name="Ivanova N."/>
            <person name="Bergholz P.W."/>
            <person name="Di Bartolo G."/>
            <person name="Hauser L."/>
            <person name="Land M."/>
            <person name="Bakermans C."/>
            <person name="Rodrigues D."/>
            <person name="Klappenbach J."/>
            <person name="Zarka D."/>
            <person name="Larimer F."/>
            <person name="Richardson P."/>
            <person name="Murray A."/>
            <person name="Thomashow M."/>
            <person name="Tiedje J.M."/>
        </authorList>
    </citation>
    <scope>NUCLEOTIDE SEQUENCE [LARGE SCALE GENOMIC DNA]</scope>
    <source>
        <strain>DSM 17307 / VKM B-2377 / 273-4</strain>
    </source>
</reference>
<accession>Q4FUF2</accession>
<sequence>MPRSLKKGPFIDAHLFAKVETALETNSRKPIKTWSRRSMILPQMVGLTLSVHNGRTHVPVIVSEQMVGHKLGEFAPTRTYRGHGIDKKAKR</sequence>
<dbReference type="EMBL" id="CP000082">
    <property type="protein sequence ID" value="AAZ18356.1"/>
    <property type="molecule type" value="Genomic_DNA"/>
</dbReference>
<dbReference type="RefSeq" id="WP_011279791.1">
    <property type="nucleotide sequence ID" value="NC_007204.1"/>
</dbReference>
<dbReference type="SMR" id="Q4FUF2"/>
<dbReference type="STRING" id="259536.Psyc_0493"/>
<dbReference type="KEGG" id="par:Psyc_0493"/>
<dbReference type="eggNOG" id="COG0185">
    <property type="taxonomic scope" value="Bacteria"/>
</dbReference>
<dbReference type="HOGENOM" id="CLU_144911_0_1_6"/>
<dbReference type="OrthoDB" id="9797833at2"/>
<dbReference type="Proteomes" id="UP000000546">
    <property type="component" value="Chromosome"/>
</dbReference>
<dbReference type="GO" id="GO:0005737">
    <property type="term" value="C:cytoplasm"/>
    <property type="evidence" value="ECO:0007669"/>
    <property type="project" value="UniProtKB-ARBA"/>
</dbReference>
<dbReference type="GO" id="GO:0015935">
    <property type="term" value="C:small ribosomal subunit"/>
    <property type="evidence" value="ECO:0007669"/>
    <property type="project" value="InterPro"/>
</dbReference>
<dbReference type="GO" id="GO:0019843">
    <property type="term" value="F:rRNA binding"/>
    <property type="evidence" value="ECO:0007669"/>
    <property type="project" value="UniProtKB-UniRule"/>
</dbReference>
<dbReference type="GO" id="GO:0003735">
    <property type="term" value="F:structural constituent of ribosome"/>
    <property type="evidence" value="ECO:0007669"/>
    <property type="project" value="InterPro"/>
</dbReference>
<dbReference type="GO" id="GO:0000028">
    <property type="term" value="P:ribosomal small subunit assembly"/>
    <property type="evidence" value="ECO:0007669"/>
    <property type="project" value="TreeGrafter"/>
</dbReference>
<dbReference type="GO" id="GO:0006412">
    <property type="term" value="P:translation"/>
    <property type="evidence" value="ECO:0007669"/>
    <property type="project" value="UniProtKB-UniRule"/>
</dbReference>
<dbReference type="FunFam" id="3.30.860.10:FF:000001">
    <property type="entry name" value="30S ribosomal protein S19"/>
    <property type="match status" value="1"/>
</dbReference>
<dbReference type="Gene3D" id="3.30.860.10">
    <property type="entry name" value="30s Ribosomal Protein S19, Chain A"/>
    <property type="match status" value="1"/>
</dbReference>
<dbReference type="HAMAP" id="MF_00531">
    <property type="entry name" value="Ribosomal_uS19"/>
    <property type="match status" value="1"/>
</dbReference>
<dbReference type="InterPro" id="IPR002222">
    <property type="entry name" value="Ribosomal_uS19"/>
</dbReference>
<dbReference type="InterPro" id="IPR005732">
    <property type="entry name" value="Ribosomal_uS19_bac-type"/>
</dbReference>
<dbReference type="InterPro" id="IPR020934">
    <property type="entry name" value="Ribosomal_uS19_CS"/>
</dbReference>
<dbReference type="InterPro" id="IPR023575">
    <property type="entry name" value="Ribosomal_uS19_SF"/>
</dbReference>
<dbReference type="NCBIfam" id="TIGR01050">
    <property type="entry name" value="rpsS_bact"/>
    <property type="match status" value="1"/>
</dbReference>
<dbReference type="PANTHER" id="PTHR11880">
    <property type="entry name" value="RIBOSOMAL PROTEIN S19P FAMILY MEMBER"/>
    <property type="match status" value="1"/>
</dbReference>
<dbReference type="PANTHER" id="PTHR11880:SF8">
    <property type="entry name" value="SMALL RIBOSOMAL SUBUNIT PROTEIN US19M"/>
    <property type="match status" value="1"/>
</dbReference>
<dbReference type="Pfam" id="PF00203">
    <property type="entry name" value="Ribosomal_S19"/>
    <property type="match status" value="1"/>
</dbReference>
<dbReference type="PIRSF" id="PIRSF002144">
    <property type="entry name" value="Ribosomal_S19"/>
    <property type="match status" value="1"/>
</dbReference>
<dbReference type="PRINTS" id="PR00975">
    <property type="entry name" value="RIBOSOMALS19"/>
</dbReference>
<dbReference type="SUPFAM" id="SSF54570">
    <property type="entry name" value="Ribosomal protein S19"/>
    <property type="match status" value="1"/>
</dbReference>
<dbReference type="PROSITE" id="PS00323">
    <property type="entry name" value="RIBOSOMAL_S19"/>
    <property type="match status" value="1"/>
</dbReference>
<gene>
    <name evidence="1" type="primary">rpsS</name>
    <name type="ordered locus">Psyc_0493</name>
</gene>
<evidence type="ECO:0000255" key="1">
    <source>
        <dbReference type="HAMAP-Rule" id="MF_00531"/>
    </source>
</evidence>
<evidence type="ECO:0000305" key="2"/>
<protein>
    <recommendedName>
        <fullName evidence="1">Small ribosomal subunit protein uS19</fullName>
    </recommendedName>
    <alternativeName>
        <fullName evidence="2">30S ribosomal protein S19</fullName>
    </alternativeName>
</protein>